<sequence>MEVRVIEGEFKGEGVKIGVVVARFNDLLTNELLSGALDCFERHSVEEVDVVKVPGSFEIPLVAKKLAESGKYDAVLALGAVVRGETKHFDLVANEVAKGVAKVSLDSGVPVIFGVITVEDELQGFNRAGVKSNKGFEYAMAALEMANLMKKLREKE</sequence>
<proteinExistence type="inferred from homology"/>
<keyword id="KW-1185">Reference proteome</keyword>
<keyword id="KW-0686">Riboflavin biosynthesis</keyword>
<keyword id="KW-0808">Transferase</keyword>
<evidence type="ECO:0000255" key="1">
    <source>
        <dbReference type="HAMAP-Rule" id="MF_00178"/>
    </source>
</evidence>
<feature type="chain" id="PRO_0000134851" description="6,7-dimethyl-8-ribityllumazine synthase">
    <location>
        <begin position="1"/>
        <end position="156"/>
    </location>
</feature>
<feature type="active site" description="Proton donor" evidence="1">
    <location>
        <position position="88"/>
    </location>
</feature>
<feature type="binding site" evidence="1">
    <location>
        <position position="24"/>
    </location>
    <ligand>
        <name>5-amino-6-(D-ribitylamino)uracil</name>
        <dbReference type="ChEBI" id="CHEBI:15934"/>
    </ligand>
</feature>
<feature type="binding site" evidence="1">
    <location>
        <begin position="56"/>
        <end position="58"/>
    </location>
    <ligand>
        <name>5-amino-6-(D-ribitylamino)uracil</name>
        <dbReference type="ChEBI" id="CHEBI:15934"/>
    </ligand>
</feature>
<feature type="binding site" evidence="1">
    <location>
        <begin position="80"/>
        <end position="82"/>
    </location>
    <ligand>
        <name>5-amino-6-(D-ribitylamino)uracil</name>
        <dbReference type="ChEBI" id="CHEBI:15934"/>
    </ligand>
</feature>
<feature type="binding site" evidence="1">
    <location>
        <begin position="85"/>
        <end position="86"/>
    </location>
    <ligand>
        <name>(2S)-2-hydroxy-3-oxobutyl phosphate</name>
        <dbReference type="ChEBI" id="CHEBI:58830"/>
    </ligand>
</feature>
<feature type="binding site" evidence="1">
    <location>
        <position position="113"/>
    </location>
    <ligand>
        <name>5-amino-6-(D-ribitylamino)uracil</name>
        <dbReference type="ChEBI" id="CHEBI:15934"/>
    </ligand>
</feature>
<feature type="binding site" evidence="1">
    <location>
        <position position="127"/>
    </location>
    <ligand>
        <name>(2S)-2-hydroxy-3-oxobutyl phosphate</name>
        <dbReference type="ChEBI" id="CHEBI:58830"/>
    </ligand>
</feature>
<name>RISB_THEKO</name>
<accession>Q5JD31</accession>
<gene>
    <name evidence="1" type="primary">ribH</name>
    <name type="ordered locus">TK0429</name>
</gene>
<comment type="function">
    <text evidence="1">Catalyzes the formation of 6,7-dimethyl-8-ribityllumazine by condensation of 5-amino-6-(D-ribitylamino)uracil with 3,4-dihydroxy-2-butanone 4-phosphate. This is the penultimate step in the biosynthesis of riboflavin.</text>
</comment>
<comment type="catalytic activity">
    <reaction evidence="1">
        <text>(2S)-2-hydroxy-3-oxobutyl phosphate + 5-amino-6-(D-ribitylamino)uracil = 6,7-dimethyl-8-(1-D-ribityl)lumazine + phosphate + 2 H2O + H(+)</text>
        <dbReference type="Rhea" id="RHEA:26152"/>
        <dbReference type="ChEBI" id="CHEBI:15377"/>
        <dbReference type="ChEBI" id="CHEBI:15378"/>
        <dbReference type="ChEBI" id="CHEBI:15934"/>
        <dbReference type="ChEBI" id="CHEBI:43474"/>
        <dbReference type="ChEBI" id="CHEBI:58201"/>
        <dbReference type="ChEBI" id="CHEBI:58830"/>
        <dbReference type="EC" id="2.5.1.78"/>
    </reaction>
</comment>
<comment type="pathway">
    <text evidence="1">Cofactor biosynthesis; riboflavin biosynthesis; riboflavin from 2-hydroxy-3-oxobutyl phosphate and 5-amino-6-(D-ribitylamino)uracil: step 1/2.</text>
</comment>
<comment type="similarity">
    <text evidence="1">Belongs to the DMRL synthase family.</text>
</comment>
<dbReference type="EC" id="2.5.1.78" evidence="1"/>
<dbReference type="EMBL" id="AP006878">
    <property type="protein sequence ID" value="BAD84618.1"/>
    <property type="molecule type" value="Genomic_DNA"/>
</dbReference>
<dbReference type="RefSeq" id="WP_011249384.1">
    <property type="nucleotide sequence ID" value="NC_006624.1"/>
</dbReference>
<dbReference type="SMR" id="Q5JD31"/>
<dbReference type="FunCoup" id="Q5JD31">
    <property type="interactions" value="58"/>
</dbReference>
<dbReference type="STRING" id="69014.TK0429"/>
<dbReference type="EnsemblBacteria" id="BAD84618">
    <property type="protein sequence ID" value="BAD84618"/>
    <property type="gene ID" value="TK0429"/>
</dbReference>
<dbReference type="GeneID" id="78446939"/>
<dbReference type="KEGG" id="tko:TK0429"/>
<dbReference type="PATRIC" id="fig|69014.16.peg.421"/>
<dbReference type="eggNOG" id="arCOG01323">
    <property type="taxonomic scope" value="Archaea"/>
</dbReference>
<dbReference type="HOGENOM" id="CLU_089358_1_1_2"/>
<dbReference type="InParanoid" id="Q5JD31"/>
<dbReference type="OrthoDB" id="7610at2157"/>
<dbReference type="PhylomeDB" id="Q5JD31"/>
<dbReference type="UniPathway" id="UPA00275">
    <property type="reaction ID" value="UER00404"/>
</dbReference>
<dbReference type="Proteomes" id="UP000000536">
    <property type="component" value="Chromosome"/>
</dbReference>
<dbReference type="GO" id="GO:0005737">
    <property type="term" value="C:cytoplasm"/>
    <property type="evidence" value="ECO:0000318"/>
    <property type="project" value="GO_Central"/>
</dbReference>
<dbReference type="GO" id="GO:0009349">
    <property type="term" value="C:riboflavin synthase complex"/>
    <property type="evidence" value="ECO:0007669"/>
    <property type="project" value="InterPro"/>
</dbReference>
<dbReference type="GO" id="GO:0000906">
    <property type="term" value="F:6,7-dimethyl-8-ribityllumazine synthase activity"/>
    <property type="evidence" value="ECO:0000318"/>
    <property type="project" value="GO_Central"/>
</dbReference>
<dbReference type="GO" id="GO:0009231">
    <property type="term" value="P:riboflavin biosynthetic process"/>
    <property type="evidence" value="ECO:0000318"/>
    <property type="project" value="GO_Central"/>
</dbReference>
<dbReference type="CDD" id="cd09209">
    <property type="entry name" value="Lumazine_synthase-I"/>
    <property type="match status" value="1"/>
</dbReference>
<dbReference type="FunFam" id="3.40.50.960:FF:000001">
    <property type="entry name" value="6,7-dimethyl-8-ribityllumazine synthase"/>
    <property type="match status" value="1"/>
</dbReference>
<dbReference type="Gene3D" id="3.40.50.960">
    <property type="entry name" value="Lumazine/riboflavin synthase"/>
    <property type="match status" value="1"/>
</dbReference>
<dbReference type="HAMAP" id="MF_00178">
    <property type="entry name" value="Lumazine_synth"/>
    <property type="match status" value="1"/>
</dbReference>
<dbReference type="InterPro" id="IPR034964">
    <property type="entry name" value="LS"/>
</dbReference>
<dbReference type="InterPro" id="IPR002180">
    <property type="entry name" value="LS/RS"/>
</dbReference>
<dbReference type="InterPro" id="IPR036467">
    <property type="entry name" value="LS/RS_sf"/>
</dbReference>
<dbReference type="NCBIfam" id="TIGR00114">
    <property type="entry name" value="lumazine-synth"/>
    <property type="match status" value="1"/>
</dbReference>
<dbReference type="PANTHER" id="PTHR21058:SF0">
    <property type="entry name" value="6,7-DIMETHYL-8-RIBITYLLUMAZINE SYNTHASE"/>
    <property type="match status" value="1"/>
</dbReference>
<dbReference type="PANTHER" id="PTHR21058">
    <property type="entry name" value="6,7-DIMETHYL-8-RIBITYLLUMAZINE SYNTHASE DMRL SYNTHASE LUMAZINE SYNTHASE"/>
    <property type="match status" value="1"/>
</dbReference>
<dbReference type="Pfam" id="PF00885">
    <property type="entry name" value="DMRL_synthase"/>
    <property type="match status" value="1"/>
</dbReference>
<dbReference type="SUPFAM" id="SSF52121">
    <property type="entry name" value="Lumazine synthase"/>
    <property type="match status" value="1"/>
</dbReference>
<reference key="1">
    <citation type="journal article" date="2005" name="Genome Res.">
        <title>Complete genome sequence of the hyperthermophilic archaeon Thermococcus kodakaraensis KOD1 and comparison with Pyrococcus genomes.</title>
        <authorList>
            <person name="Fukui T."/>
            <person name="Atomi H."/>
            <person name="Kanai T."/>
            <person name="Matsumi R."/>
            <person name="Fujiwara S."/>
            <person name="Imanaka T."/>
        </authorList>
    </citation>
    <scope>NUCLEOTIDE SEQUENCE [LARGE SCALE GENOMIC DNA]</scope>
    <source>
        <strain>ATCC BAA-918 / JCM 12380 / KOD1</strain>
    </source>
</reference>
<organism>
    <name type="scientific">Thermococcus kodakarensis (strain ATCC BAA-918 / JCM 12380 / KOD1)</name>
    <name type="common">Pyrococcus kodakaraensis (strain KOD1)</name>
    <dbReference type="NCBI Taxonomy" id="69014"/>
    <lineage>
        <taxon>Archaea</taxon>
        <taxon>Methanobacteriati</taxon>
        <taxon>Methanobacteriota</taxon>
        <taxon>Thermococci</taxon>
        <taxon>Thermococcales</taxon>
        <taxon>Thermococcaceae</taxon>
        <taxon>Thermococcus</taxon>
    </lineage>
</organism>
<protein>
    <recommendedName>
        <fullName evidence="1">6,7-dimethyl-8-ribityllumazine synthase</fullName>
        <shortName evidence="1">DMRL synthase</shortName>
        <shortName evidence="1">LS</shortName>
        <shortName evidence="1">Lumazine synthase</shortName>
        <ecNumber evidence="1">2.5.1.78</ecNumber>
    </recommendedName>
</protein>